<proteinExistence type="inferred from homology"/>
<keyword id="KW-0028">Amino-acid biosynthesis</keyword>
<keyword id="KW-0963">Cytoplasm</keyword>
<keyword id="KW-0521">NADP</keyword>
<keyword id="KW-0560">Oxidoreductase</keyword>
<keyword id="KW-0641">Proline biosynthesis</keyword>
<keyword id="KW-1185">Reference proteome</keyword>
<accession>Q2N9V1</accession>
<name>PROA_ERYLH</name>
<organism>
    <name type="scientific">Erythrobacter litoralis (strain HTCC2594)</name>
    <dbReference type="NCBI Taxonomy" id="314225"/>
    <lineage>
        <taxon>Bacteria</taxon>
        <taxon>Pseudomonadati</taxon>
        <taxon>Pseudomonadota</taxon>
        <taxon>Alphaproteobacteria</taxon>
        <taxon>Sphingomonadales</taxon>
        <taxon>Erythrobacteraceae</taxon>
        <taxon>Erythrobacter/Porphyrobacter group</taxon>
        <taxon>Erythrobacter</taxon>
    </lineage>
</organism>
<gene>
    <name evidence="1" type="primary">proA</name>
    <name type="ordered locus">ELI_07240</name>
</gene>
<sequence length="421" mass="44702">MNDQTLDPAIHIQQLGTAARDAARGLVSASTEAKNKALMEAARALREATPALLEANARDVASVEGKKDEAFIDRLKLDEARVEGMASALEQIAELPDPVGRVLAQFDRPNGLRIERVAVPIGVIGMIYESRPNVGADASALCLKSGNAVILRGGSESRHSTREIVACMQAGLKAAGLPENAVQTVQTTDRNAVAELLKADEHVDLVIPRGGRGLVELVRDQASVPTLLHLDGNCHSYVHEAADVAKAVDVVRNAKLRRTGICGATESVVVDRVIAPALILALADAMAGDCELRGDETAVQLDDRITPASEDDWNTEYLGPIASVKVVDGLDEAIEWVEGHSSHHTDAILTEDAEAARRFMTAIDSAIVMHNASTQFADGGEFGMGAEIGIATGKMHARGPVGLEQLTSFKYLVHGSGQTRE</sequence>
<comment type="function">
    <text evidence="1">Catalyzes the NADPH-dependent reduction of L-glutamate 5-phosphate into L-glutamate 5-semialdehyde and phosphate. The product spontaneously undergoes cyclization to form 1-pyrroline-5-carboxylate.</text>
</comment>
<comment type="catalytic activity">
    <reaction evidence="1">
        <text>L-glutamate 5-semialdehyde + phosphate + NADP(+) = L-glutamyl 5-phosphate + NADPH + H(+)</text>
        <dbReference type="Rhea" id="RHEA:19541"/>
        <dbReference type="ChEBI" id="CHEBI:15378"/>
        <dbReference type="ChEBI" id="CHEBI:43474"/>
        <dbReference type="ChEBI" id="CHEBI:57783"/>
        <dbReference type="ChEBI" id="CHEBI:58066"/>
        <dbReference type="ChEBI" id="CHEBI:58274"/>
        <dbReference type="ChEBI" id="CHEBI:58349"/>
        <dbReference type="EC" id="1.2.1.41"/>
    </reaction>
</comment>
<comment type="pathway">
    <text evidence="1">Amino-acid biosynthesis; L-proline biosynthesis; L-glutamate 5-semialdehyde from L-glutamate: step 2/2.</text>
</comment>
<comment type="subcellular location">
    <subcellularLocation>
        <location evidence="1">Cytoplasm</location>
    </subcellularLocation>
</comment>
<comment type="similarity">
    <text evidence="1">Belongs to the gamma-glutamyl phosphate reductase family.</text>
</comment>
<dbReference type="EC" id="1.2.1.41" evidence="1"/>
<dbReference type="EMBL" id="CP000157">
    <property type="protein sequence ID" value="ABC63540.1"/>
    <property type="molecule type" value="Genomic_DNA"/>
</dbReference>
<dbReference type="RefSeq" id="WP_011414376.1">
    <property type="nucleotide sequence ID" value="NC_007722.1"/>
</dbReference>
<dbReference type="SMR" id="Q2N9V1"/>
<dbReference type="STRING" id="314225.ELI_07240"/>
<dbReference type="KEGG" id="eli:ELI_07240"/>
<dbReference type="eggNOG" id="COG0014">
    <property type="taxonomic scope" value="Bacteria"/>
</dbReference>
<dbReference type="HOGENOM" id="CLU_030231_0_0_5"/>
<dbReference type="OrthoDB" id="9809970at2"/>
<dbReference type="UniPathway" id="UPA00098">
    <property type="reaction ID" value="UER00360"/>
</dbReference>
<dbReference type="Proteomes" id="UP000008808">
    <property type="component" value="Chromosome"/>
</dbReference>
<dbReference type="GO" id="GO:0005737">
    <property type="term" value="C:cytoplasm"/>
    <property type="evidence" value="ECO:0007669"/>
    <property type="project" value="UniProtKB-SubCell"/>
</dbReference>
<dbReference type="GO" id="GO:0004350">
    <property type="term" value="F:glutamate-5-semialdehyde dehydrogenase activity"/>
    <property type="evidence" value="ECO:0007669"/>
    <property type="project" value="UniProtKB-UniRule"/>
</dbReference>
<dbReference type="GO" id="GO:0050661">
    <property type="term" value="F:NADP binding"/>
    <property type="evidence" value="ECO:0007669"/>
    <property type="project" value="InterPro"/>
</dbReference>
<dbReference type="GO" id="GO:0055129">
    <property type="term" value="P:L-proline biosynthetic process"/>
    <property type="evidence" value="ECO:0007669"/>
    <property type="project" value="UniProtKB-UniRule"/>
</dbReference>
<dbReference type="CDD" id="cd07079">
    <property type="entry name" value="ALDH_F18-19_ProA-GPR"/>
    <property type="match status" value="1"/>
</dbReference>
<dbReference type="Gene3D" id="3.40.605.10">
    <property type="entry name" value="Aldehyde Dehydrogenase, Chain A, domain 1"/>
    <property type="match status" value="1"/>
</dbReference>
<dbReference type="Gene3D" id="3.40.309.10">
    <property type="entry name" value="Aldehyde Dehydrogenase, Chain A, domain 2"/>
    <property type="match status" value="1"/>
</dbReference>
<dbReference type="HAMAP" id="MF_00412">
    <property type="entry name" value="ProA"/>
    <property type="match status" value="1"/>
</dbReference>
<dbReference type="InterPro" id="IPR016161">
    <property type="entry name" value="Ald_DH/histidinol_DH"/>
</dbReference>
<dbReference type="InterPro" id="IPR016163">
    <property type="entry name" value="Ald_DH_C"/>
</dbReference>
<dbReference type="InterPro" id="IPR016162">
    <property type="entry name" value="Ald_DH_N"/>
</dbReference>
<dbReference type="InterPro" id="IPR015590">
    <property type="entry name" value="Aldehyde_DH_dom"/>
</dbReference>
<dbReference type="InterPro" id="IPR012134">
    <property type="entry name" value="Glu-5-SA_DH"/>
</dbReference>
<dbReference type="InterPro" id="IPR000965">
    <property type="entry name" value="GPR_dom"/>
</dbReference>
<dbReference type="NCBIfam" id="NF001221">
    <property type="entry name" value="PRK00197.1"/>
    <property type="match status" value="1"/>
</dbReference>
<dbReference type="NCBIfam" id="TIGR00407">
    <property type="entry name" value="proA"/>
    <property type="match status" value="1"/>
</dbReference>
<dbReference type="PANTHER" id="PTHR11063:SF8">
    <property type="entry name" value="DELTA-1-PYRROLINE-5-CARBOXYLATE SYNTHASE"/>
    <property type="match status" value="1"/>
</dbReference>
<dbReference type="PANTHER" id="PTHR11063">
    <property type="entry name" value="GLUTAMATE SEMIALDEHYDE DEHYDROGENASE"/>
    <property type="match status" value="1"/>
</dbReference>
<dbReference type="Pfam" id="PF00171">
    <property type="entry name" value="Aldedh"/>
    <property type="match status" value="2"/>
</dbReference>
<dbReference type="PIRSF" id="PIRSF000151">
    <property type="entry name" value="GPR"/>
    <property type="match status" value="1"/>
</dbReference>
<dbReference type="SUPFAM" id="SSF53720">
    <property type="entry name" value="ALDH-like"/>
    <property type="match status" value="1"/>
</dbReference>
<protein>
    <recommendedName>
        <fullName evidence="1">Gamma-glutamyl phosphate reductase</fullName>
        <shortName evidence="1">GPR</shortName>
        <ecNumber evidence="1">1.2.1.41</ecNumber>
    </recommendedName>
    <alternativeName>
        <fullName evidence="1">Glutamate-5-semialdehyde dehydrogenase</fullName>
    </alternativeName>
    <alternativeName>
        <fullName evidence="1">Glutamyl-gamma-semialdehyde dehydrogenase</fullName>
        <shortName evidence="1">GSA dehydrogenase</shortName>
    </alternativeName>
</protein>
<evidence type="ECO:0000255" key="1">
    <source>
        <dbReference type="HAMAP-Rule" id="MF_00412"/>
    </source>
</evidence>
<feature type="chain" id="PRO_0000340880" description="Gamma-glutamyl phosphate reductase">
    <location>
        <begin position="1"/>
        <end position="421"/>
    </location>
</feature>
<reference key="1">
    <citation type="journal article" date="2009" name="J. Bacteriol.">
        <title>Complete genome sequence of Erythrobacter litoralis HTCC2594.</title>
        <authorList>
            <person name="Oh H.M."/>
            <person name="Giovannoni S.J."/>
            <person name="Ferriera S."/>
            <person name="Johnson J."/>
            <person name="Cho J.C."/>
        </authorList>
    </citation>
    <scope>NUCLEOTIDE SEQUENCE [LARGE SCALE GENOMIC DNA]</scope>
    <source>
        <strain>HTCC2594</strain>
    </source>
</reference>